<evidence type="ECO:0000255" key="1">
    <source>
        <dbReference type="HAMAP-Rule" id="MF_01458"/>
    </source>
</evidence>
<feature type="chain" id="PRO_0000400416" description="ATP-dependent zinc metalloprotease FtsH">
    <location>
        <begin position="1"/>
        <end position="631"/>
    </location>
</feature>
<feature type="topological domain" description="Cytoplasmic" evidence="1">
    <location>
        <begin position="1"/>
        <end position="5"/>
    </location>
</feature>
<feature type="transmembrane region" description="Helical" evidence="1">
    <location>
        <begin position="6"/>
        <end position="26"/>
    </location>
</feature>
<feature type="topological domain" description="Periplasmic" evidence="1">
    <location>
        <begin position="27"/>
        <end position="102"/>
    </location>
</feature>
<feature type="transmembrane region" description="Helical" evidence="1">
    <location>
        <begin position="103"/>
        <end position="123"/>
    </location>
</feature>
<feature type="topological domain" description="Cytoplasmic" evidence="1">
    <location>
        <begin position="124"/>
        <end position="631"/>
    </location>
</feature>
<feature type="active site" evidence="1">
    <location>
        <position position="419"/>
    </location>
</feature>
<feature type="binding site" evidence="1">
    <location>
        <begin position="196"/>
        <end position="203"/>
    </location>
    <ligand>
        <name>ATP</name>
        <dbReference type="ChEBI" id="CHEBI:30616"/>
    </ligand>
</feature>
<feature type="binding site" evidence="1">
    <location>
        <position position="418"/>
    </location>
    <ligand>
        <name>Zn(2+)</name>
        <dbReference type="ChEBI" id="CHEBI:29105"/>
        <note>catalytic</note>
    </ligand>
</feature>
<feature type="binding site" evidence="1">
    <location>
        <position position="422"/>
    </location>
    <ligand>
        <name>Zn(2+)</name>
        <dbReference type="ChEBI" id="CHEBI:29105"/>
        <note>catalytic</note>
    </ligand>
</feature>
<feature type="binding site" evidence="1">
    <location>
        <position position="494"/>
    </location>
    <ligand>
        <name>Zn(2+)</name>
        <dbReference type="ChEBI" id="CHEBI:29105"/>
        <note>catalytic</note>
    </ligand>
</feature>
<sequence length="631" mass="69800">MKKSNPWFVFFWITLLVIVLMFINFARQGGNEVELEYSQFKQHIKAGSVFKVLVAPGLIRGQFRDGDGVFKRFKTVPMDDPNLVKDMEDNKVLEFSATEKSGWLGSLLLNWGPVVLLILFCFWMMRGMSMGNKQAMSFGKTKAKLAVGASKKITFKDVAGCDEAKEELQELIEFLKDPARFQKLGGKIPKGVLLFGSPGTGKTLLAKAVAGEANVPFFSSSGSEFVEMFVGVGASRVRDLFDHGRKSAPCLLFIDEIDAVGRHRFAGIGGGHDEREQTLNQLLVEMDGFDSKEGVILIAATNRPDVLDPALLRPGRFDRQVIILSPDLKDREEILGVHSKKIRLDNDVNLNVIARRTPGFVGADLANLVNEAALLAARNSQNAVNMKNMEEAIDRILAGPQRKSRLMSDKEKNIIAYHEAGHTLVAKFLPSADPVHKVSIIPRGPALGYTLQLPEEDKYLTSKSELLDKLSILFGGRVAEELVFSEITTGAQNDISKATGIAMRMVTEFGMSDKIGPMALQRPNEEVFLGRDISRDARHSGKTSELIDEEVKNIIYSSKSRASKIIKDNVSILNKIVSYLLERENLSGEDIDKIIKGEELAPLSESSSVDEETKKKSTVEKKVINEKVIIS</sequence>
<keyword id="KW-0067">ATP-binding</keyword>
<keyword id="KW-0997">Cell inner membrane</keyword>
<keyword id="KW-1003">Cell membrane</keyword>
<keyword id="KW-0378">Hydrolase</keyword>
<keyword id="KW-0472">Membrane</keyword>
<keyword id="KW-0479">Metal-binding</keyword>
<keyword id="KW-0482">Metalloprotease</keyword>
<keyword id="KW-0547">Nucleotide-binding</keyword>
<keyword id="KW-0645">Protease</keyword>
<keyword id="KW-0812">Transmembrane</keyword>
<keyword id="KW-1133">Transmembrane helix</keyword>
<keyword id="KW-0862">Zinc</keyword>
<gene>
    <name evidence="1" type="primary">ftsH</name>
    <name type="ordered locus">TGRD_206</name>
</gene>
<organism>
    <name type="scientific">Endomicrobium trichonymphae</name>
    <dbReference type="NCBI Taxonomy" id="1408204"/>
    <lineage>
        <taxon>Bacteria</taxon>
        <taxon>Pseudomonadati</taxon>
        <taxon>Elusimicrobiota</taxon>
        <taxon>Endomicrobiia</taxon>
        <taxon>Endomicrobiales</taxon>
        <taxon>Endomicrobiaceae</taxon>
        <taxon>Candidatus Endomicrobiellum</taxon>
    </lineage>
</organism>
<name>FTSH_ENDTX</name>
<dbReference type="EC" id="3.4.24.-" evidence="1"/>
<dbReference type="EMBL" id="AP009510">
    <property type="protein sequence ID" value="BAG13689.1"/>
    <property type="molecule type" value="Genomic_DNA"/>
</dbReference>
<dbReference type="RefSeq" id="WP_015423217.1">
    <property type="nucleotide sequence ID" value="NC_020419.1"/>
</dbReference>
<dbReference type="SMR" id="B1GZK7"/>
<dbReference type="STRING" id="471821.TGRD_206"/>
<dbReference type="MEROPS" id="M41.021"/>
<dbReference type="KEGG" id="rsd:TGRD_206"/>
<dbReference type="PATRIC" id="fig|471821.5.peg.312"/>
<dbReference type="HOGENOM" id="CLU_000688_16_2_0"/>
<dbReference type="Proteomes" id="UP000001691">
    <property type="component" value="Chromosome"/>
</dbReference>
<dbReference type="GO" id="GO:0005886">
    <property type="term" value="C:plasma membrane"/>
    <property type="evidence" value="ECO:0007669"/>
    <property type="project" value="UniProtKB-SubCell"/>
</dbReference>
<dbReference type="GO" id="GO:0005524">
    <property type="term" value="F:ATP binding"/>
    <property type="evidence" value="ECO:0007669"/>
    <property type="project" value="UniProtKB-UniRule"/>
</dbReference>
<dbReference type="GO" id="GO:0016887">
    <property type="term" value="F:ATP hydrolysis activity"/>
    <property type="evidence" value="ECO:0007669"/>
    <property type="project" value="UniProtKB-UniRule"/>
</dbReference>
<dbReference type="GO" id="GO:0004176">
    <property type="term" value="F:ATP-dependent peptidase activity"/>
    <property type="evidence" value="ECO:0007669"/>
    <property type="project" value="InterPro"/>
</dbReference>
<dbReference type="GO" id="GO:0004222">
    <property type="term" value="F:metalloendopeptidase activity"/>
    <property type="evidence" value="ECO:0007669"/>
    <property type="project" value="InterPro"/>
</dbReference>
<dbReference type="GO" id="GO:0008270">
    <property type="term" value="F:zinc ion binding"/>
    <property type="evidence" value="ECO:0007669"/>
    <property type="project" value="UniProtKB-UniRule"/>
</dbReference>
<dbReference type="GO" id="GO:0030163">
    <property type="term" value="P:protein catabolic process"/>
    <property type="evidence" value="ECO:0007669"/>
    <property type="project" value="UniProtKB-UniRule"/>
</dbReference>
<dbReference type="GO" id="GO:0006508">
    <property type="term" value="P:proteolysis"/>
    <property type="evidence" value="ECO:0007669"/>
    <property type="project" value="UniProtKB-KW"/>
</dbReference>
<dbReference type="CDD" id="cd19501">
    <property type="entry name" value="RecA-like_FtsH"/>
    <property type="match status" value="1"/>
</dbReference>
<dbReference type="FunFam" id="1.10.8.60:FF:000001">
    <property type="entry name" value="ATP-dependent zinc metalloprotease FtsH"/>
    <property type="match status" value="1"/>
</dbReference>
<dbReference type="FunFam" id="1.20.58.760:FF:000001">
    <property type="entry name" value="ATP-dependent zinc metalloprotease FtsH"/>
    <property type="match status" value="1"/>
</dbReference>
<dbReference type="FunFam" id="3.40.50.300:FF:000001">
    <property type="entry name" value="ATP-dependent zinc metalloprotease FtsH"/>
    <property type="match status" value="1"/>
</dbReference>
<dbReference type="Gene3D" id="1.10.8.60">
    <property type="match status" value="1"/>
</dbReference>
<dbReference type="Gene3D" id="3.30.720.210">
    <property type="match status" value="1"/>
</dbReference>
<dbReference type="Gene3D" id="3.40.50.300">
    <property type="entry name" value="P-loop containing nucleotide triphosphate hydrolases"/>
    <property type="match status" value="1"/>
</dbReference>
<dbReference type="Gene3D" id="1.20.58.760">
    <property type="entry name" value="Peptidase M41"/>
    <property type="match status" value="1"/>
</dbReference>
<dbReference type="HAMAP" id="MF_01458">
    <property type="entry name" value="FtsH"/>
    <property type="match status" value="1"/>
</dbReference>
<dbReference type="InterPro" id="IPR003593">
    <property type="entry name" value="AAA+_ATPase"/>
</dbReference>
<dbReference type="InterPro" id="IPR041569">
    <property type="entry name" value="AAA_lid_3"/>
</dbReference>
<dbReference type="InterPro" id="IPR003959">
    <property type="entry name" value="ATPase_AAA_core"/>
</dbReference>
<dbReference type="InterPro" id="IPR003960">
    <property type="entry name" value="ATPase_AAA_CS"/>
</dbReference>
<dbReference type="InterPro" id="IPR005936">
    <property type="entry name" value="FtsH"/>
</dbReference>
<dbReference type="InterPro" id="IPR027417">
    <property type="entry name" value="P-loop_NTPase"/>
</dbReference>
<dbReference type="InterPro" id="IPR011546">
    <property type="entry name" value="Pept_M41_FtsH_extracell"/>
</dbReference>
<dbReference type="InterPro" id="IPR000642">
    <property type="entry name" value="Peptidase_M41"/>
</dbReference>
<dbReference type="InterPro" id="IPR037219">
    <property type="entry name" value="Peptidase_M41-like"/>
</dbReference>
<dbReference type="NCBIfam" id="TIGR01241">
    <property type="entry name" value="FtsH_fam"/>
    <property type="match status" value="1"/>
</dbReference>
<dbReference type="PANTHER" id="PTHR23076:SF97">
    <property type="entry name" value="ATP-DEPENDENT ZINC METALLOPROTEASE YME1L1"/>
    <property type="match status" value="1"/>
</dbReference>
<dbReference type="PANTHER" id="PTHR23076">
    <property type="entry name" value="METALLOPROTEASE M41 FTSH"/>
    <property type="match status" value="1"/>
</dbReference>
<dbReference type="Pfam" id="PF00004">
    <property type="entry name" value="AAA"/>
    <property type="match status" value="1"/>
</dbReference>
<dbReference type="Pfam" id="PF17862">
    <property type="entry name" value="AAA_lid_3"/>
    <property type="match status" value="1"/>
</dbReference>
<dbReference type="Pfam" id="PF06480">
    <property type="entry name" value="FtsH_ext"/>
    <property type="match status" value="1"/>
</dbReference>
<dbReference type="Pfam" id="PF01434">
    <property type="entry name" value="Peptidase_M41"/>
    <property type="match status" value="1"/>
</dbReference>
<dbReference type="SMART" id="SM00382">
    <property type="entry name" value="AAA"/>
    <property type="match status" value="1"/>
</dbReference>
<dbReference type="SUPFAM" id="SSF140990">
    <property type="entry name" value="FtsH protease domain-like"/>
    <property type="match status" value="1"/>
</dbReference>
<dbReference type="SUPFAM" id="SSF52540">
    <property type="entry name" value="P-loop containing nucleoside triphosphate hydrolases"/>
    <property type="match status" value="1"/>
</dbReference>
<dbReference type="PROSITE" id="PS00674">
    <property type="entry name" value="AAA"/>
    <property type="match status" value="1"/>
</dbReference>
<proteinExistence type="inferred from homology"/>
<reference key="1">
    <citation type="journal article" date="2008" name="Proc. Natl. Acad. Sci. U.S.A.">
        <title>Complete genome of the uncultured termite group 1 bacteria in a single host protist cell.</title>
        <authorList>
            <person name="Hongoh Y."/>
            <person name="Sharma V.K."/>
            <person name="Prakash T."/>
            <person name="Noda S."/>
            <person name="Taylor T.D."/>
            <person name="Kudo T."/>
            <person name="Sakaki Y."/>
            <person name="Toyoda A."/>
            <person name="Hattori M."/>
            <person name="Ohkuma M."/>
        </authorList>
    </citation>
    <scope>NUCLEOTIDE SEQUENCE [LARGE SCALE GENOMIC DNA]</scope>
</reference>
<protein>
    <recommendedName>
        <fullName evidence="1">ATP-dependent zinc metalloprotease FtsH</fullName>
        <ecNumber evidence="1">3.4.24.-</ecNumber>
    </recommendedName>
</protein>
<comment type="function">
    <text evidence="1">Acts as a processive, ATP-dependent zinc metallopeptidase for both cytoplasmic and membrane proteins. Plays a role in the quality control of integral membrane proteins.</text>
</comment>
<comment type="cofactor">
    <cofactor evidence="1">
        <name>Zn(2+)</name>
        <dbReference type="ChEBI" id="CHEBI:29105"/>
    </cofactor>
    <text evidence="1">Binds 1 zinc ion per subunit.</text>
</comment>
<comment type="subunit">
    <text evidence="1">Homohexamer.</text>
</comment>
<comment type="subcellular location">
    <subcellularLocation>
        <location evidence="1">Cell inner membrane</location>
        <topology evidence="1">Multi-pass membrane protein</topology>
        <orientation evidence="1">Cytoplasmic side</orientation>
    </subcellularLocation>
</comment>
<comment type="similarity">
    <text evidence="1">In the central section; belongs to the AAA ATPase family.</text>
</comment>
<comment type="similarity">
    <text evidence="1">In the C-terminal section; belongs to the peptidase M41 family.</text>
</comment>
<accession>B1GZK7</accession>